<accession>Q8U4M3</accession>
<name>DPM1_PYRFU</name>
<feature type="chain" id="PRO_0000456893" description="Dolichol-phosphate mannosyltransferase">
    <location>
        <begin position="1"/>
        <end position="352"/>
    </location>
</feature>
<feature type="topological domain" description="Cytoplasmic" evidence="5">
    <location>
        <begin position="1"/>
        <end position="229"/>
    </location>
</feature>
<feature type="transmembrane region" description="Helical" evidence="6">
    <location>
        <begin position="230"/>
        <end position="256"/>
    </location>
</feature>
<feature type="topological domain" description="Extracellular" evidence="5">
    <location>
        <begin position="257"/>
        <end position="261"/>
    </location>
</feature>
<feature type="transmembrane region" description="Helical" evidence="6">
    <location>
        <begin position="262"/>
        <end position="286"/>
    </location>
</feature>
<feature type="topological domain" description="Cytoplasmic" evidence="5">
    <location>
        <begin position="287"/>
        <end position="293"/>
    </location>
</feature>
<feature type="transmembrane region" description="Helical" evidence="6">
    <location>
        <begin position="294"/>
        <end position="320"/>
    </location>
</feature>
<feature type="topological domain" description="Extracellular" evidence="5">
    <location>
        <begin position="321"/>
        <end position="325"/>
    </location>
</feature>
<feature type="transmembrane region" description="Helical" evidence="6">
    <location>
        <begin position="326"/>
        <end position="350"/>
    </location>
</feature>
<feature type="topological domain" description="Cytoplasmic" evidence="5">
    <location>
        <begin position="351"/>
        <end position="352"/>
    </location>
</feature>
<feature type="binding site" evidence="3 9 10 11">
    <location>
        <position position="8"/>
    </location>
    <ligand>
        <name>GDP-alpha-D-mannose</name>
        <dbReference type="ChEBI" id="CHEBI:57527"/>
    </ligand>
</feature>
<feature type="binding site" evidence="3 9 10 11">
    <location>
        <position position="10"/>
    </location>
    <ligand>
        <name>GDP-alpha-D-mannose</name>
        <dbReference type="ChEBI" id="CHEBI:57527"/>
    </ligand>
</feature>
<feature type="binding site" evidence="3 10">
    <location>
        <position position="12"/>
    </location>
    <ligand>
        <name>GDP-alpha-D-mannose</name>
        <dbReference type="ChEBI" id="CHEBI:57527"/>
    </ligand>
</feature>
<feature type="binding site" evidence="3 9 10 11">
    <location>
        <position position="37"/>
    </location>
    <ligand>
        <name>GDP-alpha-D-mannose</name>
        <dbReference type="ChEBI" id="CHEBI:57527"/>
    </ligand>
</feature>
<feature type="binding site" evidence="3 9 10 11">
    <location>
        <position position="39"/>
    </location>
    <ligand>
        <name>GDP-alpha-D-mannose</name>
        <dbReference type="ChEBI" id="CHEBI:57527"/>
    </ligand>
</feature>
<feature type="binding site" evidence="3 10">
    <location>
        <position position="89"/>
    </location>
    <ligand>
        <name>GDP-alpha-D-mannose</name>
        <dbReference type="ChEBI" id="CHEBI:57527"/>
    </ligand>
</feature>
<feature type="binding site" evidence="3 9 10 11">
    <location>
        <position position="90"/>
    </location>
    <ligand>
        <name>GDP-alpha-D-mannose</name>
        <dbReference type="ChEBI" id="CHEBI:57527"/>
    </ligand>
</feature>
<feature type="binding site" evidence="3 9 10">
    <location>
        <position position="91"/>
    </location>
    <ligand>
        <name>GDP-alpha-D-mannose</name>
        <dbReference type="ChEBI" id="CHEBI:57527"/>
    </ligand>
</feature>
<feature type="binding site" evidence="3 9">
    <location>
        <position position="91"/>
    </location>
    <ligand>
        <name>Mg(2+)</name>
        <dbReference type="ChEBI" id="CHEBI:18420"/>
    </ligand>
</feature>
<feature type="binding site" evidence="3 10">
    <location>
        <position position="91"/>
    </location>
    <ligand>
        <name>Mn(2+)</name>
        <dbReference type="ChEBI" id="CHEBI:29035"/>
    </ligand>
</feature>
<feature type="binding site" evidence="3 9 10">
    <location>
        <position position="93"/>
    </location>
    <ligand>
        <name>GDP-alpha-D-mannose</name>
        <dbReference type="ChEBI" id="CHEBI:57527"/>
    </ligand>
</feature>
<feature type="binding site" evidence="3 9">
    <location>
        <position position="93"/>
    </location>
    <ligand>
        <name>Mg(2+)</name>
        <dbReference type="ChEBI" id="CHEBI:18420"/>
    </ligand>
</feature>
<feature type="binding site" evidence="3 10">
    <location>
        <position position="93"/>
    </location>
    <ligand>
        <name>Mn(2+)</name>
        <dbReference type="ChEBI" id="CHEBI:29035"/>
    </ligand>
</feature>
<feature type="binding site" evidence="3 10 11">
    <location>
        <position position="117"/>
    </location>
    <ligand>
        <name>GDP-alpha-D-mannose</name>
        <dbReference type="ChEBI" id="CHEBI:57527"/>
    </ligand>
</feature>
<feature type="binding site" evidence="3 10 11">
    <location>
        <position position="156"/>
    </location>
    <ligand>
        <name>GDP-alpha-D-mannose</name>
        <dbReference type="ChEBI" id="CHEBI:57527"/>
    </ligand>
</feature>
<feature type="binding site" evidence="3 10 11">
    <location>
        <position position="178"/>
    </location>
    <ligand>
        <name>GDP-alpha-D-mannose</name>
        <dbReference type="ChEBI" id="CHEBI:57527"/>
    </ligand>
</feature>
<feature type="binding site" evidence="3 9 10">
    <location>
        <position position="202"/>
    </location>
    <ligand>
        <name>GDP-alpha-D-mannose</name>
        <dbReference type="ChEBI" id="CHEBI:57527"/>
    </ligand>
</feature>
<feature type="binding site" evidence="3 9 10">
    <location>
        <position position="208"/>
    </location>
    <ligand>
        <name>GDP-alpha-D-mannose</name>
        <dbReference type="ChEBI" id="CHEBI:57527"/>
    </ligand>
</feature>
<feature type="mutagenesis site" description="Decreases enzyme activity." evidence="3">
    <original>D</original>
    <variation>A</variation>
    <location>
        <position position="89"/>
    </location>
</feature>
<feature type="mutagenesis site" description="Decreases enzyme activity." evidence="3">
    <original>D</original>
    <variation>A</variation>
    <location>
        <position position="91"/>
    </location>
</feature>
<feature type="mutagenesis site" description="Decreases enzyme activity." evidence="3">
    <original>Q</original>
    <variation>A</variation>
    <location>
        <position position="93"/>
    </location>
</feature>
<feature type="strand" evidence="12">
    <location>
        <begin position="3"/>
        <end position="11"/>
    </location>
</feature>
<feature type="helix" evidence="12">
    <location>
        <begin position="15"/>
        <end position="26"/>
    </location>
</feature>
<feature type="turn" evidence="12">
    <location>
        <begin position="27"/>
        <end position="29"/>
    </location>
</feature>
<feature type="strand" evidence="12">
    <location>
        <begin position="32"/>
        <end position="38"/>
    </location>
</feature>
<feature type="strand" evidence="12">
    <location>
        <begin position="42"/>
        <end position="44"/>
    </location>
</feature>
<feature type="helix" evidence="12">
    <location>
        <begin position="47"/>
        <end position="52"/>
    </location>
</feature>
<feature type="turn" evidence="12">
    <location>
        <begin position="53"/>
        <end position="55"/>
    </location>
</feature>
<feature type="strand" evidence="12">
    <location>
        <begin position="58"/>
        <end position="62"/>
    </location>
</feature>
<feature type="helix" evidence="12">
    <location>
        <begin position="69"/>
        <end position="79"/>
    </location>
</feature>
<feature type="strand" evidence="12">
    <location>
        <begin position="83"/>
        <end position="87"/>
    </location>
</feature>
<feature type="strand" evidence="12">
    <location>
        <begin position="90"/>
        <end position="94"/>
    </location>
</feature>
<feature type="helix" evidence="12">
    <location>
        <begin position="96"/>
        <end position="98"/>
    </location>
</feature>
<feature type="helix" evidence="12">
    <location>
        <begin position="99"/>
        <end position="107"/>
    </location>
</feature>
<feature type="strand" evidence="12">
    <location>
        <begin position="111"/>
        <end position="119"/>
    </location>
</feature>
<feature type="strand" evidence="12">
    <location>
        <begin position="123"/>
        <end position="126"/>
    </location>
</feature>
<feature type="helix" evidence="12">
    <location>
        <begin position="129"/>
        <end position="145"/>
    </location>
</feature>
<feature type="helix" evidence="12">
    <location>
        <begin position="147"/>
        <end position="149"/>
    </location>
</feature>
<feature type="strand" evidence="12">
    <location>
        <begin position="160"/>
        <end position="163"/>
    </location>
</feature>
<feature type="helix" evidence="12">
    <location>
        <begin position="164"/>
        <end position="166"/>
    </location>
</feature>
<feature type="turn" evidence="12">
    <location>
        <begin position="167"/>
        <end position="169"/>
    </location>
</feature>
<feature type="strand" evidence="12">
    <location>
        <begin position="175"/>
        <end position="177"/>
    </location>
</feature>
<feature type="helix" evidence="12">
    <location>
        <begin position="179"/>
        <end position="186"/>
    </location>
</feature>
<feature type="strand" evidence="12">
    <location>
        <begin position="192"/>
        <end position="196"/>
    </location>
</feature>
<feature type="turn" evidence="13">
    <location>
        <begin position="210"/>
        <end position="212"/>
    </location>
</feature>
<feature type="helix" evidence="12">
    <location>
        <begin position="214"/>
        <end position="227"/>
    </location>
</feature>
<feature type="helix" evidence="12">
    <location>
        <begin position="230"/>
        <end position="256"/>
    </location>
</feature>
<feature type="turn" evidence="12">
    <location>
        <begin position="257"/>
        <end position="259"/>
    </location>
</feature>
<feature type="helix" evidence="12">
    <location>
        <begin position="262"/>
        <end position="283"/>
    </location>
</feature>
<feature type="turn" evidence="12">
    <location>
        <begin position="284"/>
        <end position="286"/>
    </location>
</feature>
<feature type="helix" evidence="12">
    <location>
        <begin position="287"/>
        <end position="289"/>
    </location>
</feature>
<feature type="helix" evidence="12">
    <location>
        <begin position="294"/>
        <end position="321"/>
    </location>
</feature>
<feature type="helix" evidence="12">
    <location>
        <begin position="326"/>
        <end position="347"/>
    </location>
</feature>
<feature type="turn" evidence="12">
    <location>
        <begin position="348"/>
        <end position="350"/>
    </location>
</feature>
<comment type="function">
    <text evidence="3">Transfers mannose from GDP-mannose to dolichol monophosphate to form dolichol phosphate mannose (Dol-P-Man) which is the mannosyl donor in pathways leading to N-glycosylation, glycosyl phosphatidylinositol membrane anchoring, and O-mannosylation of proteins.</text>
</comment>
<comment type="catalytic activity">
    <reaction evidence="3">
        <text>a di-trans,poly-cis-dolichyl phosphate + GDP-alpha-D-mannose = a di-trans,poly-cis-dolichyl beta-D-mannosyl phosphate + GDP</text>
        <dbReference type="Rhea" id="RHEA:21184"/>
        <dbReference type="Rhea" id="RHEA-COMP:19498"/>
        <dbReference type="Rhea" id="RHEA-COMP:19501"/>
        <dbReference type="ChEBI" id="CHEBI:57527"/>
        <dbReference type="ChEBI" id="CHEBI:57683"/>
        <dbReference type="ChEBI" id="CHEBI:58189"/>
        <dbReference type="ChEBI" id="CHEBI:58211"/>
        <dbReference type="EC" id="2.4.1.83"/>
    </reaction>
</comment>
<comment type="cofactor">
    <cofactor evidence="3">
        <name>Mg(2+)</name>
        <dbReference type="ChEBI" id="CHEBI:18420"/>
    </cofactor>
    <cofactor evidence="3">
        <name>Mn(2+)</name>
        <dbReference type="ChEBI" id="CHEBI:29035"/>
    </cofactor>
    <cofactor evidence="3">
        <name>Ca(2+)</name>
        <dbReference type="ChEBI" id="CHEBI:29108"/>
    </cofactor>
    <text evidence="3">Binds 1 divalent metal cation.</text>
</comment>
<comment type="pathway">
    <text evidence="6">Protein modification; protein glycosylation.</text>
</comment>
<comment type="subcellular location">
    <subcellularLocation>
        <location evidence="5">Cell membrane</location>
        <topology evidence="2">Multi-pass membrane protein</topology>
    </subcellularLocation>
</comment>
<comment type="similarity">
    <text evidence="5">Belongs to the glycosyltransferase 2 family.</text>
</comment>
<proteinExistence type="evidence at protein level"/>
<organism evidence="8">
    <name type="scientific">Pyrococcus furiosus (strain ATCC 43587 / DSM 3638 / JCM 8422 / Vc1)</name>
    <dbReference type="NCBI Taxonomy" id="186497"/>
    <lineage>
        <taxon>Archaea</taxon>
        <taxon>Methanobacteriati</taxon>
        <taxon>Methanobacteriota</taxon>
        <taxon>Thermococci</taxon>
        <taxon>Thermococcales</taxon>
        <taxon>Thermococcaceae</taxon>
        <taxon>Pyrococcus</taxon>
    </lineage>
</organism>
<gene>
    <name evidence="7" type="ordered locus">PF0058</name>
</gene>
<reference evidence="8" key="1">
    <citation type="journal article" date="1999" name="Genetics">
        <title>Divergence of the hyperthermophilic archaea Pyrococcus furiosus and P. horikoshii inferred from complete genomic sequences.</title>
        <authorList>
            <person name="Maeder D.L."/>
            <person name="Weiss R.B."/>
            <person name="Dunn D.M."/>
            <person name="Cherry J.L."/>
            <person name="Gonzalez J.M."/>
            <person name="DiRuggiero J."/>
            <person name="Robb F.T."/>
        </authorList>
    </citation>
    <scope>NUCLEOTIDE SEQUENCE [LARGE SCALE GENOMIC DNA]</scope>
    <source>
        <strain evidence="8">ATCC 43587 / DSM 3638 / JCM 8422 / Vc1</strain>
    </source>
</reference>
<reference evidence="9 10 11" key="2">
    <citation type="journal article" date="2017" name="Nat. Commun.">
        <title>Structural basis for dolichylphosphate mannose biosynthesis.</title>
        <authorList>
            <person name="Gandini R."/>
            <person name="Reichenbach T."/>
            <person name="Tan T.C."/>
            <person name="Divne C."/>
        </authorList>
    </citation>
    <scope>X-RAY CRYSTALLOGRAPHY (2.00 ANGSTROMS) IN COMPLEX WITH GDP; GDP-MANNOSE; DOLICHYL PHOSPHATE MANNOSE; MAGNESIUM AND MANGANESE</scope>
    <scope>FUNCTION</scope>
    <scope>CATALYTIC ACTIVITY</scope>
    <scope>COFACTOR</scope>
    <scope>PATHWAY</scope>
    <scope>TOPOLOGY</scope>
    <scope>MUTAGENESIS OF ASP-89; ASP-91 AND GLN-93</scope>
</reference>
<evidence type="ECO:0000250" key="1">
    <source>
        <dbReference type="UniProtKB" id="P14020"/>
    </source>
</evidence>
<evidence type="ECO:0000255" key="2"/>
<evidence type="ECO:0000269" key="3">
    <source>
    </source>
</evidence>
<evidence type="ECO:0000303" key="4">
    <source>
    </source>
</evidence>
<evidence type="ECO:0000305" key="5"/>
<evidence type="ECO:0000305" key="6">
    <source>
    </source>
</evidence>
<evidence type="ECO:0000312" key="7">
    <source>
        <dbReference type="EMBL" id="AAL80182.1"/>
    </source>
</evidence>
<evidence type="ECO:0000312" key="8">
    <source>
        <dbReference type="Proteomes" id="UP000001013"/>
    </source>
</evidence>
<evidence type="ECO:0007744" key="9">
    <source>
        <dbReference type="PDB" id="5MLZ"/>
    </source>
</evidence>
<evidence type="ECO:0007744" key="10">
    <source>
        <dbReference type="PDB" id="5MM0"/>
    </source>
</evidence>
<evidence type="ECO:0007744" key="11">
    <source>
        <dbReference type="PDB" id="5MM1"/>
    </source>
</evidence>
<evidence type="ECO:0007829" key="12">
    <source>
        <dbReference type="PDB" id="5MLZ"/>
    </source>
</evidence>
<evidence type="ECO:0007829" key="13">
    <source>
        <dbReference type="PDB" id="5MM0"/>
    </source>
</evidence>
<keyword id="KW-0002">3D-structure</keyword>
<keyword id="KW-1003">Cell membrane</keyword>
<keyword id="KW-0328">Glycosyltransferase</keyword>
<keyword id="KW-0460">Magnesium</keyword>
<keyword id="KW-0464">Manganese</keyword>
<keyword id="KW-0472">Membrane</keyword>
<keyword id="KW-0479">Metal-binding</keyword>
<keyword id="KW-1185">Reference proteome</keyword>
<keyword id="KW-0808">Transferase</keyword>
<keyword id="KW-0812">Transmembrane</keyword>
<keyword id="KW-1133">Transmembrane helix</keyword>
<dbReference type="EC" id="2.4.1.83" evidence="3"/>
<dbReference type="EMBL" id="AE009950">
    <property type="protein sequence ID" value="AAL80182.1"/>
    <property type="molecule type" value="Genomic_DNA"/>
</dbReference>
<dbReference type="RefSeq" id="WP_011011170.1">
    <property type="nucleotide sequence ID" value="NC_003413.1"/>
</dbReference>
<dbReference type="PDB" id="5MLZ">
    <property type="method" value="X-ray"/>
    <property type="resolution" value="2.00 A"/>
    <property type="chains" value="A=1-352"/>
</dbReference>
<dbReference type="PDB" id="5MM0">
    <property type="method" value="X-ray"/>
    <property type="resolution" value="2.30 A"/>
    <property type="chains" value="A=1-352"/>
</dbReference>
<dbReference type="PDB" id="5MM1">
    <property type="method" value="X-ray"/>
    <property type="resolution" value="2.60 A"/>
    <property type="chains" value="A=1-352"/>
</dbReference>
<dbReference type="PDBsum" id="5MLZ"/>
<dbReference type="PDBsum" id="5MM0"/>
<dbReference type="PDBsum" id="5MM1"/>
<dbReference type="SMR" id="Q8U4M3"/>
<dbReference type="STRING" id="186497.PF0058"/>
<dbReference type="CAZy" id="GT2">
    <property type="family name" value="Glycosyltransferase Family 2"/>
</dbReference>
<dbReference type="PaxDb" id="186497-PF0058"/>
<dbReference type="DNASU" id="1467887"/>
<dbReference type="GeneID" id="1467887"/>
<dbReference type="KEGG" id="pfu:PF0058"/>
<dbReference type="PATRIC" id="fig|186497.12.peg.62"/>
<dbReference type="eggNOG" id="arCOG00894">
    <property type="taxonomic scope" value="Archaea"/>
</dbReference>
<dbReference type="HOGENOM" id="CLU_039727_0_0_2"/>
<dbReference type="OrthoDB" id="11098at2157"/>
<dbReference type="PhylomeDB" id="Q8U4M3"/>
<dbReference type="BRENDA" id="2.4.1.83">
    <property type="organism ID" value="5243"/>
</dbReference>
<dbReference type="UniPathway" id="UPA00378"/>
<dbReference type="Proteomes" id="UP000001013">
    <property type="component" value="Chromosome"/>
</dbReference>
<dbReference type="GO" id="GO:0005886">
    <property type="term" value="C:plasma membrane"/>
    <property type="evidence" value="ECO:0000305"/>
    <property type="project" value="UniProtKB"/>
</dbReference>
<dbReference type="GO" id="GO:0004582">
    <property type="term" value="F:dolichyl-phosphate beta-D-mannosyltransferase activity"/>
    <property type="evidence" value="ECO:0000314"/>
    <property type="project" value="UniProtKB"/>
</dbReference>
<dbReference type="GO" id="GO:0046872">
    <property type="term" value="F:metal ion binding"/>
    <property type="evidence" value="ECO:0000314"/>
    <property type="project" value="UniProtKB"/>
</dbReference>
<dbReference type="GO" id="GO:0180047">
    <property type="term" value="P:dolichol phosphate mannose biosynthetic process"/>
    <property type="evidence" value="ECO:0000314"/>
    <property type="project" value="UniProtKB"/>
</dbReference>
<dbReference type="GO" id="GO:0006488">
    <property type="term" value="P:dolichol-linked oligosaccharide biosynthetic process"/>
    <property type="evidence" value="ECO:0007669"/>
    <property type="project" value="TreeGrafter"/>
</dbReference>
<dbReference type="GO" id="GO:0006506">
    <property type="term" value="P:GPI anchor biosynthetic process"/>
    <property type="evidence" value="ECO:0007669"/>
    <property type="project" value="TreeGrafter"/>
</dbReference>
<dbReference type="GO" id="GO:0000271">
    <property type="term" value="P:polysaccharide biosynthetic process"/>
    <property type="evidence" value="ECO:0007669"/>
    <property type="project" value="InterPro"/>
</dbReference>
<dbReference type="GO" id="GO:0035269">
    <property type="term" value="P:protein O-linked mannosylation"/>
    <property type="evidence" value="ECO:0000314"/>
    <property type="project" value="UniProtKB"/>
</dbReference>
<dbReference type="CDD" id="cd06442">
    <property type="entry name" value="DPM1_like"/>
    <property type="match status" value="1"/>
</dbReference>
<dbReference type="FunFam" id="3.90.550.10:FF:000119">
    <property type="entry name" value="Dolichol-phosphate mannosyltransferase subunit 1"/>
    <property type="match status" value="1"/>
</dbReference>
<dbReference type="Gene3D" id="3.90.550.10">
    <property type="entry name" value="Spore Coat Polysaccharide Biosynthesis Protein SpsA, Chain A"/>
    <property type="match status" value="1"/>
</dbReference>
<dbReference type="InterPro" id="IPR039528">
    <property type="entry name" value="DPM1-like"/>
</dbReference>
<dbReference type="InterPro" id="IPR001173">
    <property type="entry name" value="Glyco_trans_2-like"/>
</dbReference>
<dbReference type="InterPro" id="IPR007267">
    <property type="entry name" value="GtrA_DPMS_TM"/>
</dbReference>
<dbReference type="InterPro" id="IPR029044">
    <property type="entry name" value="Nucleotide-diphossugar_trans"/>
</dbReference>
<dbReference type="PANTHER" id="PTHR43398">
    <property type="entry name" value="DOLICHOL-PHOSPHATE MANNOSYLTRANSFERASE SUBUNIT 1"/>
    <property type="match status" value="1"/>
</dbReference>
<dbReference type="PANTHER" id="PTHR43398:SF1">
    <property type="entry name" value="DOLICHOL-PHOSPHATE MANNOSYLTRANSFERASE SUBUNIT 1"/>
    <property type="match status" value="1"/>
</dbReference>
<dbReference type="Pfam" id="PF00535">
    <property type="entry name" value="Glycos_transf_2"/>
    <property type="match status" value="1"/>
</dbReference>
<dbReference type="Pfam" id="PF04138">
    <property type="entry name" value="GtrA_DPMS_TM"/>
    <property type="match status" value="1"/>
</dbReference>
<dbReference type="SUPFAM" id="SSF53448">
    <property type="entry name" value="Nucleotide-diphospho-sugar transferases"/>
    <property type="match status" value="1"/>
</dbReference>
<protein>
    <recommendedName>
        <fullName evidence="1">Dolichol-phosphate mannosyltransferase</fullName>
        <ecNumber evidence="3">2.4.1.83</ecNumber>
    </recommendedName>
    <alternativeName>
        <fullName evidence="1">Dolichol-phosphate mannose synthase</fullName>
        <shortName evidence="1">DPM synthase</shortName>
    </alternativeName>
    <alternativeName>
        <fullName evidence="1">Dolichyl-phosphate beta-D-mannosyltransferase</fullName>
    </alternativeName>
    <alternativeName>
        <fullName evidence="1">Mannose-P-dolichol synthase</fullName>
        <shortName evidence="1">MPD synthase</shortName>
    </alternativeName>
    <alternativeName>
        <fullName evidence="4">PfDPMS</fullName>
    </alternativeName>
</protein>
<sequence length="352" mass="40072">MKVSVIIPTYNERENLEELFSRIDNALQGLNYEIVVVDDDSPDRTWEKAQELSSKYPVKVIRRTKEKGLSSAVIRGFKEASGDVFVVMDADLQHPPEVIPKLIEAIKNGSDIAIGSRYVKGGKVENWPFYRKLISKGAIMVGRIALPKIRDIKDPVSGFFALRKEVVEGVELNPIGFKILMEILIKGKYSKVVEVPFTFGIRARGESKLKGKTIFEYLRHIYRLMKWEGEIDRIVKFSIVGLSGILVNEGFLWLFVNLGIPKEIAVIPAVELSILNNFFWNDIWTFKDIRRGSIFSRLLKFHIAALSGAVVNFIVYWILLFLGIHYLIANLVGIVLSFGVRYVINRHVTWAT</sequence>